<gene>
    <name type="ordered locus">MIMI_L416</name>
</gene>
<name>YL416_MIMIV</name>
<accession>Q5UQL5</accession>
<comment type="subcellular location">
    <subcellularLocation>
        <location evidence="2">Membrane</location>
        <topology evidence="2">Multi-pass membrane protein</topology>
    </subcellularLocation>
</comment>
<organism>
    <name type="scientific">Acanthamoeba polyphaga mimivirus</name>
    <name type="common">APMV</name>
    <dbReference type="NCBI Taxonomy" id="212035"/>
    <lineage>
        <taxon>Viruses</taxon>
        <taxon>Varidnaviria</taxon>
        <taxon>Bamfordvirae</taxon>
        <taxon>Nucleocytoviricota</taxon>
        <taxon>Megaviricetes</taxon>
        <taxon>Imitervirales</taxon>
        <taxon>Mimiviridae</taxon>
        <taxon>Megamimivirinae</taxon>
        <taxon>Mimivirus</taxon>
        <taxon>Mimivirus bradfordmassiliense</taxon>
    </lineage>
</organism>
<evidence type="ECO:0000255" key="1"/>
<evidence type="ECO:0000305" key="2"/>
<feature type="chain" id="PRO_0000071278" description="Uncharacterized protein L416">
    <location>
        <begin position="1"/>
        <end position="105"/>
    </location>
</feature>
<feature type="transmembrane region" description="Helical" evidence="1">
    <location>
        <begin position="10"/>
        <end position="30"/>
    </location>
</feature>
<feature type="transmembrane region" description="Helical" evidence="1">
    <location>
        <begin position="48"/>
        <end position="68"/>
    </location>
</feature>
<keyword id="KW-0472">Membrane</keyword>
<keyword id="KW-1185">Reference proteome</keyword>
<keyword id="KW-0812">Transmembrane</keyword>
<keyword id="KW-1133">Transmembrane helix</keyword>
<organismHost>
    <name type="scientific">Acanthamoeba polyphaga</name>
    <name type="common">Amoeba</name>
    <dbReference type="NCBI Taxonomy" id="5757"/>
</organismHost>
<sequence length="105" mass="12078">MYTSIYQNSYVVFIISLIVLLIIFYVFKIGYSTVVVNGKVEKRFNWKYPLAISLVIWVIWYFLLYPPSDVNINSSKQVGGTETSTIGDIVGSGVRQQKINMDNWL</sequence>
<proteinExistence type="predicted"/>
<dbReference type="EMBL" id="AY653733">
    <property type="protein sequence ID" value="AAV50685.1"/>
    <property type="molecule type" value="Genomic_DNA"/>
</dbReference>
<dbReference type="SMR" id="Q5UQL5"/>
<dbReference type="KEGG" id="vg:9925037"/>
<dbReference type="OrthoDB" id="27752at10239"/>
<dbReference type="Proteomes" id="UP000001134">
    <property type="component" value="Genome"/>
</dbReference>
<dbReference type="GO" id="GO:0016020">
    <property type="term" value="C:membrane"/>
    <property type="evidence" value="ECO:0007669"/>
    <property type="project" value="UniProtKB-SubCell"/>
</dbReference>
<reference key="1">
    <citation type="journal article" date="2004" name="Science">
        <title>The 1.2-megabase genome sequence of Mimivirus.</title>
        <authorList>
            <person name="Raoult D."/>
            <person name="Audic S."/>
            <person name="Robert C."/>
            <person name="Abergel C."/>
            <person name="Renesto P."/>
            <person name="Ogata H."/>
            <person name="La Scola B."/>
            <person name="Susan M."/>
            <person name="Claverie J.-M."/>
        </authorList>
    </citation>
    <scope>NUCLEOTIDE SEQUENCE [LARGE SCALE GENOMIC DNA]</scope>
    <source>
        <strain>Rowbotham-Bradford</strain>
    </source>
</reference>
<protein>
    <recommendedName>
        <fullName>Uncharacterized protein L416</fullName>
    </recommendedName>
</protein>